<feature type="signal peptide" evidence="1">
    <location>
        <begin position="1"/>
        <end position="15"/>
    </location>
</feature>
<feature type="chain" id="PRO_0000014094" description="Uncharacterized protein Mb1359">
    <location>
        <begin position="16"/>
        <end position="304"/>
    </location>
</feature>
<feature type="domain" description="Thioredoxin" evidence="2">
    <location>
        <begin position="28"/>
        <end position="151"/>
    </location>
</feature>
<gene>
    <name type="ordered locus">BQ2027_MB1359</name>
</gene>
<dbReference type="EMBL" id="LT708304">
    <property type="protein sequence ID" value="SIT99962.1"/>
    <property type="molecule type" value="Genomic_DNA"/>
</dbReference>
<dbReference type="RefSeq" id="NP_855013.1">
    <property type="nucleotide sequence ID" value="NC_002945.3"/>
</dbReference>
<dbReference type="RefSeq" id="WP_003406887.1">
    <property type="nucleotide sequence ID" value="NC_002945.4"/>
</dbReference>
<dbReference type="SMR" id="P64808"/>
<dbReference type="KEGG" id="mbo:BQ2027_MB1359"/>
<dbReference type="PATRIC" id="fig|233413.5.peg.1491"/>
<dbReference type="Proteomes" id="UP000001419">
    <property type="component" value="Chromosome"/>
</dbReference>
<dbReference type="GO" id="GO:0016491">
    <property type="term" value="F:oxidoreductase activity"/>
    <property type="evidence" value="ECO:0007669"/>
    <property type="project" value="UniProtKB-ARBA"/>
</dbReference>
<dbReference type="GO" id="GO:0045454">
    <property type="term" value="P:cell redox homeostasis"/>
    <property type="evidence" value="ECO:0007669"/>
    <property type="project" value="TreeGrafter"/>
</dbReference>
<dbReference type="GO" id="GO:0006950">
    <property type="term" value="P:response to stress"/>
    <property type="evidence" value="ECO:0007669"/>
    <property type="project" value="UniProtKB-ARBA"/>
</dbReference>
<dbReference type="CDD" id="cd02956">
    <property type="entry name" value="ybbN"/>
    <property type="match status" value="1"/>
</dbReference>
<dbReference type="Gene3D" id="3.40.30.10">
    <property type="entry name" value="Glutaredoxin"/>
    <property type="match status" value="1"/>
</dbReference>
<dbReference type="Gene3D" id="1.25.40.10">
    <property type="entry name" value="Tetratricopeptide repeat domain"/>
    <property type="match status" value="1"/>
</dbReference>
<dbReference type="InterPro" id="IPR036249">
    <property type="entry name" value="Thioredoxin-like_sf"/>
</dbReference>
<dbReference type="InterPro" id="IPR013766">
    <property type="entry name" value="Thioredoxin_domain"/>
</dbReference>
<dbReference type="InterPro" id="IPR011990">
    <property type="entry name" value="TPR-like_helical_dom_sf"/>
</dbReference>
<dbReference type="PANTHER" id="PTHR43601">
    <property type="entry name" value="THIOREDOXIN, MITOCHONDRIAL"/>
    <property type="match status" value="1"/>
</dbReference>
<dbReference type="PANTHER" id="PTHR43601:SF3">
    <property type="entry name" value="THIOREDOXIN, MITOCHONDRIAL"/>
    <property type="match status" value="1"/>
</dbReference>
<dbReference type="Pfam" id="PF00085">
    <property type="entry name" value="Thioredoxin"/>
    <property type="match status" value="1"/>
</dbReference>
<dbReference type="Pfam" id="PF14561">
    <property type="entry name" value="TPR_20"/>
    <property type="match status" value="1"/>
</dbReference>
<dbReference type="SUPFAM" id="SSF52833">
    <property type="entry name" value="Thioredoxin-like"/>
    <property type="match status" value="1"/>
</dbReference>
<dbReference type="PROSITE" id="PS51352">
    <property type="entry name" value="THIOREDOXIN_2"/>
    <property type="match status" value="1"/>
</dbReference>
<organism>
    <name type="scientific">Mycobacterium bovis (strain ATCC BAA-935 / AF2122/97)</name>
    <dbReference type="NCBI Taxonomy" id="233413"/>
    <lineage>
        <taxon>Bacteria</taxon>
        <taxon>Bacillati</taxon>
        <taxon>Actinomycetota</taxon>
        <taxon>Actinomycetes</taxon>
        <taxon>Mycobacteriales</taxon>
        <taxon>Mycobacteriaceae</taxon>
        <taxon>Mycobacterium</taxon>
        <taxon>Mycobacterium tuberculosis complex</taxon>
    </lineage>
</organism>
<evidence type="ECO:0000255" key="1"/>
<evidence type="ECO:0000255" key="2">
    <source>
        <dbReference type="PROSITE-ProRule" id="PRU00691"/>
    </source>
</evidence>
<protein>
    <recommendedName>
        <fullName>Uncharacterized protein Mb1359</fullName>
    </recommendedName>
</protein>
<reference key="1">
    <citation type="journal article" date="2003" name="Proc. Natl. Acad. Sci. U.S.A.">
        <title>The complete genome sequence of Mycobacterium bovis.</title>
        <authorList>
            <person name="Garnier T."/>
            <person name="Eiglmeier K."/>
            <person name="Camus J.-C."/>
            <person name="Medina N."/>
            <person name="Mansoor H."/>
            <person name="Pryor M."/>
            <person name="Duthoy S."/>
            <person name="Grondin S."/>
            <person name="Lacroix C."/>
            <person name="Monsempe C."/>
            <person name="Simon S."/>
            <person name="Harris B."/>
            <person name="Atkin R."/>
            <person name="Doggett J."/>
            <person name="Mayes R."/>
            <person name="Keating L."/>
            <person name="Wheeler P.R."/>
            <person name="Parkhill J."/>
            <person name="Barrell B.G."/>
            <person name="Cole S.T."/>
            <person name="Gordon S.V."/>
            <person name="Hewinson R.G."/>
        </authorList>
    </citation>
    <scope>NUCLEOTIDE SEQUENCE [LARGE SCALE GENOMIC DNA]</scope>
    <source>
        <strain>ATCC BAA-935 / AF2122/97</strain>
    </source>
</reference>
<reference key="2">
    <citation type="journal article" date="2017" name="Genome Announc.">
        <title>Updated reference genome sequence and annotation of Mycobacterium bovis AF2122/97.</title>
        <authorList>
            <person name="Malone K.M."/>
            <person name="Farrell D."/>
            <person name="Stuber T.P."/>
            <person name="Schubert O.T."/>
            <person name="Aebersold R."/>
            <person name="Robbe-Austerman S."/>
            <person name="Gordon S.V."/>
        </authorList>
    </citation>
    <scope>NUCLEOTIDE SEQUENCE [LARGE SCALE GENOMIC DNA]</scope>
    <scope>GENOME REANNOTATION</scope>
    <source>
        <strain>ATCC BAA-935 / AF2122/97</strain>
    </source>
</reference>
<name>Y1359_MYCBO</name>
<accession>P64808</accession>
<accession>A0A1R3XY14</accession>
<accession>Q10636</accession>
<accession>X2BHL7</accession>
<sequence length="304" mass="32170">MTRPRPPLGPAMAGAVDLSGIKQRAQQNAAASTDADRALSTPSGVTEITEANFEDEVIVRSDEVPVVVLLWSPRSEVCVDLLDTLSGLAAAAKGKWSLASVNVDVAPRVAQIFGVQAVPTVVALAAGQPISSFQGLQPADQLSRWVDSLLSATAGKLKGAASSEESTEVDPAVAQARQQLEDGDFVAARKSYQAILDANPGSVEAKAAIRQIEFLIRATAQRPDAVSVADSLSDDIDAAFAAADVQVLNQDVSAAFERLIALVRRTSGEERTRVRTRLIELFELFDPADPEVVAGRRNLANALY</sequence>
<proteinExistence type="inferred from homology"/>
<keyword id="KW-1185">Reference proteome</keyword>
<keyword id="KW-0732">Signal</keyword>